<organism>
    <name type="scientific">Neisseria gonorrhoeae (strain NCCP11945)</name>
    <dbReference type="NCBI Taxonomy" id="521006"/>
    <lineage>
        <taxon>Bacteria</taxon>
        <taxon>Pseudomonadati</taxon>
        <taxon>Pseudomonadota</taxon>
        <taxon>Betaproteobacteria</taxon>
        <taxon>Neisseriales</taxon>
        <taxon>Neisseriaceae</taxon>
        <taxon>Neisseria</taxon>
    </lineage>
</organism>
<evidence type="ECO:0000255" key="1">
    <source>
        <dbReference type="HAMAP-Rule" id="MF_00056"/>
    </source>
</evidence>
<comment type="catalytic activity">
    <reaction evidence="1">
        <text>D-arabinose 5-phosphate + phosphoenolpyruvate + H2O = 3-deoxy-alpha-D-manno-2-octulosonate-8-phosphate + phosphate</text>
        <dbReference type="Rhea" id="RHEA:14053"/>
        <dbReference type="ChEBI" id="CHEBI:15377"/>
        <dbReference type="ChEBI" id="CHEBI:43474"/>
        <dbReference type="ChEBI" id="CHEBI:57693"/>
        <dbReference type="ChEBI" id="CHEBI:58702"/>
        <dbReference type="ChEBI" id="CHEBI:85985"/>
        <dbReference type="EC" id="2.5.1.55"/>
    </reaction>
</comment>
<comment type="pathway">
    <text evidence="1">Carbohydrate biosynthesis; 3-deoxy-D-manno-octulosonate biosynthesis; 3-deoxy-D-manno-octulosonate from D-ribulose 5-phosphate: step 2/3.</text>
</comment>
<comment type="pathway">
    <text evidence="1">Bacterial outer membrane biogenesis; lipopolysaccharide biosynthesis.</text>
</comment>
<comment type="subcellular location">
    <subcellularLocation>
        <location evidence="1">Cytoplasm</location>
    </subcellularLocation>
</comment>
<comment type="similarity">
    <text evidence="1">Belongs to the KdsA family.</text>
</comment>
<feature type="chain" id="PRO_1000091824" description="2-dehydro-3-deoxyphosphooctonate aldolase">
    <location>
        <begin position="1"/>
        <end position="280"/>
    </location>
</feature>
<gene>
    <name evidence="1" type="primary">kdsA</name>
    <name type="ordered locus">NGK_1296</name>
</gene>
<proteinExistence type="inferred from homology"/>
<keyword id="KW-0963">Cytoplasm</keyword>
<keyword id="KW-0448">Lipopolysaccharide biosynthesis</keyword>
<keyword id="KW-0808">Transferase</keyword>
<sequence length="280" mass="30516">MDIKINDITLGNNSPFVLFGGINVLEDLDSTLQTCAHYVEVTRKLGIPYIFKASFDKANRSSIHSYRGVGLEEGLKIFEKVKAEFGIPVITDVHEPHQCQPVAEVCDVIQLPAFLARQTDLVAAMAETGNVINIKKPQFLSPSQMKNIVEKFREAGNGKLILCERGSSFGYDNLVVDMLGFGVMKQTCGNLPVIFDVTHSLQTRDAGSAASGGRRAQALDLALAGMATRLAGLFLESHPDPKLAKCDGPSALPLHLLENFLIRIKALDDLIKSQPILTIE</sequence>
<accession>B4RMD6</accession>
<name>KDSA_NEIG2</name>
<reference key="1">
    <citation type="journal article" date="2008" name="J. Bacteriol.">
        <title>Complete genome sequence of Neisseria gonorrhoeae NCCP11945.</title>
        <authorList>
            <person name="Chung G.T."/>
            <person name="Yoo J.S."/>
            <person name="Oh H.B."/>
            <person name="Lee Y.S."/>
            <person name="Cha S.H."/>
            <person name="Kim S.J."/>
            <person name="Yoo C.K."/>
        </authorList>
    </citation>
    <scope>NUCLEOTIDE SEQUENCE [LARGE SCALE GENOMIC DNA]</scope>
    <source>
        <strain>NCCP11945</strain>
    </source>
</reference>
<protein>
    <recommendedName>
        <fullName evidence="1">2-dehydro-3-deoxyphosphooctonate aldolase</fullName>
        <ecNumber evidence="1">2.5.1.55</ecNumber>
    </recommendedName>
    <alternativeName>
        <fullName evidence="1">3-deoxy-D-manno-octulosonic acid 8-phosphate synthase</fullName>
    </alternativeName>
    <alternativeName>
        <fullName evidence="1">KDO-8-phosphate synthase</fullName>
        <shortName evidence="1">KDO 8-P synthase</shortName>
        <shortName evidence="1">KDOPS</shortName>
    </alternativeName>
    <alternativeName>
        <fullName evidence="1">Phospho-2-dehydro-3-deoxyoctonate aldolase</fullName>
    </alternativeName>
</protein>
<dbReference type="EC" id="2.5.1.55" evidence="1"/>
<dbReference type="EMBL" id="CP001050">
    <property type="protein sequence ID" value="ACF29971.1"/>
    <property type="molecule type" value="Genomic_DNA"/>
</dbReference>
<dbReference type="RefSeq" id="WP_003688911.1">
    <property type="nucleotide sequence ID" value="NC_011035.1"/>
</dbReference>
<dbReference type="SMR" id="B4RMD6"/>
<dbReference type="GeneID" id="66752958"/>
<dbReference type="KEGG" id="ngk:NGK_1296"/>
<dbReference type="HOGENOM" id="CLU_036666_0_0_4"/>
<dbReference type="UniPathway" id="UPA00030"/>
<dbReference type="UniPathway" id="UPA00357">
    <property type="reaction ID" value="UER00474"/>
</dbReference>
<dbReference type="Proteomes" id="UP000002564">
    <property type="component" value="Chromosome"/>
</dbReference>
<dbReference type="GO" id="GO:0005737">
    <property type="term" value="C:cytoplasm"/>
    <property type="evidence" value="ECO:0007669"/>
    <property type="project" value="UniProtKB-SubCell"/>
</dbReference>
<dbReference type="GO" id="GO:0008676">
    <property type="term" value="F:3-deoxy-8-phosphooctulonate synthase activity"/>
    <property type="evidence" value="ECO:0007669"/>
    <property type="project" value="UniProtKB-UniRule"/>
</dbReference>
<dbReference type="GO" id="GO:0019294">
    <property type="term" value="P:keto-3-deoxy-D-manno-octulosonic acid biosynthetic process"/>
    <property type="evidence" value="ECO:0007669"/>
    <property type="project" value="UniProtKB-UniRule"/>
</dbReference>
<dbReference type="Gene3D" id="3.20.20.70">
    <property type="entry name" value="Aldolase class I"/>
    <property type="match status" value="1"/>
</dbReference>
<dbReference type="HAMAP" id="MF_00056">
    <property type="entry name" value="KDO8P_synth"/>
    <property type="match status" value="1"/>
</dbReference>
<dbReference type="InterPro" id="IPR013785">
    <property type="entry name" value="Aldolase_TIM"/>
</dbReference>
<dbReference type="InterPro" id="IPR006218">
    <property type="entry name" value="DAHP1/KDSA"/>
</dbReference>
<dbReference type="InterPro" id="IPR006269">
    <property type="entry name" value="KDO8P_synthase"/>
</dbReference>
<dbReference type="NCBIfam" id="TIGR01362">
    <property type="entry name" value="KDO8P_synth"/>
    <property type="match status" value="1"/>
</dbReference>
<dbReference type="NCBIfam" id="NF003543">
    <property type="entry name" value="PRK05198.1"/>
    <property type="match status" value="1"/>
</dbReference>
<dbReference type="NCBIfam" id="NF009109">
    <property type="entry name" value="PRK12457.1"/>
    <property type="match status" value="1"/>
</dbReference>
<dbReference type="PANTHER" id="PTHR21057">
    <property type="entry name" value="PHOSPHO-2-DEHYDRO-3-DEOXYHEPTONATE ALDOLASE"/>
    <property type="match status" value="1"/>
</dbReference>
<dbReference type="Pfam" id="PF00793">
    <property type="entry name" value="DAHP_synth_1"/>
    <property type="match status" value="1"/>
</dbReference>
<dbReference type="SUPFAM" id="SSF51569">
    <property type="entry name" value="Aldolase"/>
    <property type="match status" value="1"/>
</dbReference>